<comment type="function">
    <text evidence="1">Catalyzes the specific phosphorylation of 1,6-anhydro-N-acetylmuramic acid (anhMurNAc) with the simultaneous cleavage of the 1,6-anhydro ring, generating MurNAc-6-P. Is required for the utilization of anhMurNAc either imported from the medium or derived from its own cell wall murein, and thus plays a role in cell wall recycling.</text>
</comment>
<comment type="catalytic activity">
    <reaction evidence="1">
        <text>1,6-anhydro-N-acetyl-beta-muramate + ATP + H2O = N-acetyl-D-muramate 6-phosphate + ADP + H(+)</text>
        <dbReference type="Rhea" id="RHEA:24952"/>
        <dbReference type="ChEBI" id="CHEBI:15377"/>
        <dbReference type="ChEBI" id="CHEBI:15378"/>
        <dbReference type="ChEBI" id="CHEBI:30616"/>
        <dbReference type="ChEBI" id="CHEBI:58690"/>
        <dbReference type="ChEBI" id="CHEBI:58722"/>
        <dbReference type="ChEBI" id="CHEBI:456216"/>
        <dbReference type="EC" id="2.7.1.170"/>
    </reaction>
</comment>
<comment type="pathway">
    <text evidence="1">Amino-sugar metabolism; 1,6-anhydro-N-acetylmuramate degradation.</text>
</comment>
<comment type="pathway">
    <text evidence="1">Cell wall biogenesis; peptidoglycan recycling.</text>
</comment>
<comment type="similarity">
    <text evidence="1">Belongs to the anhydro-N-acetylmuramic acid kinase family.</text>
</comment>
<name>ANMK_XANOR</name>
<organism>
    <name type="scientific">Xanthomonas oryzae pv. oryzae (strain KACC10331 / KXO85)</name>
    <dbReference type="NCBI Taxonomy" id="291331"/>
    <lineage>
        <taxon>Bacteria</taxon>
        <taxon>Pseudomonadati</taxon>
        <taxon>Pseudomonadota</taxon>
        <taxon>Gammaproteobacteria</taxon>
        <taxon>Lysobacterales</taxon>
        <taxon>Lysobacteraceae</taxon>
        <taxon>Xanthomonas</taxon>
    </lineage>
</organism>
<gene>
    <name evidence="1" type="primary">anmK</name>
    <name type="ordered locus">XOO0512</name>
</gene>
<proteinExistence type="inferred from homology"/>
<keyword id="KW-0067">ATP-binding</keyword>
<keyword id="KW-0119">Carbohydrate metabolism</keyword>
<keyword id="KW-0418">Kinase</keyword>
<keyword id="KW-0547">Nucleotide-binding</keyword>
<keyword id="KW-1185">Reference proteome</keyword>
<keyword id="KW-0808">Transferase</keyword>
<feature type="chain" id="PRO_0000250087" description="Anhydro-N-acetylmuramic acid kinase">
    <location>
        <begin position="1"/>
        <end position="377"/>
    </location>
</feature>
<feature type="binding site" evidence="1">
    <location>
        <begin position="18"/>
        <end position="25"/>
    </location>
    <ligand>
        <name>ATP</name>
        <dbReference type="ChEBI" id="CHEBI:30616"/>
    </ligand>
</feature>
<dbReference type="EC" id="2.7.1.170" evidence="1"/>
<dbReference type="EMBL" id="AE013598">
    <property type="protein sequence ID" value="AAW73766.1"/>
    <property type="molecule type" value="Genomic_DNA"/>
</dbReference>
<dbReference type="SMR" id="Q5H5K4"/>
<dbReference type="STRING" id="291331.XOO0512"/>
<dbReference type="KEGG" id="xoo:XOO0512"/>
<dbReference type="HOGENOM" id="CLU_038782_0_0_6"/>
<dbReference type="UniPathway" id="UPA00343"/>
<dbReference type="UniPathway" id="UPA00544"/>
<dbReference type="Proteomes" id="UP000006735">
    <property type="component" value="Chromosome"/>
</dbReference>
<dbReference type="GO" id="GO:0005524">
    <property type="term" value="F:ATP binding"/>
    <property type="evidence" value="ECO:0007669"/>
    <property type="project" value="UniProtKB-UniRule"/>
</dbReference>
<dbReference type="GO" id="GO:0016301">
    <property type="term" value="F:kinase activity"/>
    <property type="evidence" value="ECO:0007669"/>
    <property type="project" value="UniProtKB-KW"/>
</dbReference>
<dbReference type="GO" id="GO:0016773">
    <property type="term" value="F:phosphotransferase activity, alcohol group as acceptor"/>
    <property type="evidence" value="ECO:0007669"/>
    <property type="project" value="UniProtKB-UniRule"/>
</dbReference>
<dbReference type="GO" id="GO:0097175">
    <property type="term" value="P:1,6-anhydro-N-acetyl-beta-muramic acid catabolic process"/>
    <property type="evidence" value="ECO:0007669"/>
    <property type="project" value="UniProtKB-UniRule"/>
</dbReference>
<dbReference type="GO" id="GO:0006040">
    <property type="term" value="P:amino sugar metabolic process"/>
    <property type="evidence" value="ECO:0007669"/>
    <property type="project" value="InterPro"/>
</dbReference>
<dbReference type="GO" id="GO:0009254">
    <property type="term" value="P:peptidoglycan turnover"/>
    <property type="evidence" value="ECO:0007669"/>
    <property type="project" value="UniProtKB-UniRule"/>
</dbReference>
<dbReference type="CDD" id="cd24050">
    <property type="entry name" value="ASKHA_NBD_ANMK"/>
    <property type="match status" value="1"/>
</dbReference>
<dbReference type="Gene3D" id="3.30.420.40">
    <property type="match status" value="2"/>
</dbReference>
<dbReference type="HAMAP" id="MF_01270">
    <property type="entry name" value="AnhMurNAc_kinase"/>
    <property type="match status" value="1"/>
</dbReference>
<dbReference type="InterPro" id="IPR005338">
    <property type="entry name" value="Anhydro_N_Ac-Mur_kinase"/>
</dbReference>
<dbReference type="InterPro" id="IPR043129">
    <property type="entry name" value="ATPase_NBD"/>
</dbReference>
<dbReference type="NCBIfam" id="NF007139">
    <property type="entry name" value="PRK09585.1-3"/>
    <property type="match status" value="1"/>
</dbReference>
<dbReference type="NCBIfam" id="NF007148">
    <property type="entry name" value="PRK09585.3-2"/>
    <property type="match status" value="1"/>
</dbReference>
<dbReference type="PANTHER" id="PTHR30605">
    <property type="entry name" value="ANHYDRO-N-ACETYLMURAMIC ACID KINASE"/>
    <property type="match status" value="1"/>
</dbReference>
<dbReference type="PANTHER" id="PTHR30605:SF0">
    <property type="entry name" value="ANHYDRO-N-ACETYLMURAMIC ACID KINASE"/>
    <property type="match status" value="1"/>
</dbReference>
<dbReference type="Pfam" id="PF03702">
    <property type="entry name" value="AnmK"/>
    <property type="match status" value="1"/>
</dbReference>
<dbReference type="SUPFAM" id="SSF53067">
    <property type="entry name" value="Actin-like ATPase domain"/>
    <property type="match status" value="1"/>
</dbReference>
<evidence type="ECO:0000255" key="1">
    <source>
        <dbReference type="HAMAP-Rule" id="MF_01270"/>
    </source>
</evidence>
<accession>Q5H5K4</accession>
<sequence length="377" mass="39525">MPVLEHVDSLLYLGLMSGTSADGIDAALVRFAEDTHRRCELVAGTTVAWEPQLRETLVALGQGAETVAIDALGQLDAQVGLAFAAAANQLIRDSGVERRRIRAIGSHGQTIRHRPEADPAFTWQIGDASRIAEHTGITTVADFRRRDVAAGGQGAPLMPAFHLAMLGAGDQDSAVLNLGGIGNLTLIPRDGAVLGFDTGPANALLDSWCQRHHGTPFDAEGAFAASGRVDAALLQALLADPWFALPPPKSTGREQFHLDWVLQAMGSARLDAADVQATLLELTAASVADALLRLQPSTRRVLVCGGGVRNPVLLARLAARLPGVVVESSARYGLDPDYLEAMGFAWLAAELLAGRAANLPSVTGAAGPRLLGAIYPA</sequence>
<protein>
    <recommendedName>
        <fullName evidence="1">Anhydro-N-acetylmuramic acid kinase</fullName>
        <ecNumber evidence="1">2.7.1.170</ecNumber>
    </recommendedName>
    <alternativeName>
        <fullName evidence="1">AnhMurNAc kinase</fullName>
    </alternativeName>
</protein>
<reference key="1">
    <citation type="journal article" date="2005" name="Nucleic Acids Res.">
        <title>The genome sequence of Xanthomonas oryzae pathovar oryzae KACC10331, the bacterial blight pathogen of rice.</title>
        <authorList>
            <person name="Lee B.-M."/>
            <person name="Park Y.-J."/>
            <person name="Park D.-S."/>
            <person name="Kang H.-W."/>
            <person name="Kim J.-G."/>
            <person name="Song E.-S."/>
            <person name="Park I.-C."/>
            <person name="Yoon U.-H."/>
            <person name="Hahn J.-H."/>
            <person name="Koo B.-S."/>
            <person name="Lee G.-B."/>
            <person name="Kim H."/>
            <person name="Park H.-S."/>
            <person name="Yoon K.-O."/>
            <person name="Kim J.-H."/>
            <person name="Jung C.-H."/>
            <person name="Koh N.-H."/>
            <person name="Seo J.-S."/>
            <person name="Go S.-J."/>
        </authorList>
    </citation>
    <scope>NUCLEOTIDE SEQUENCE [LARGE SCALE GENOMIC DNA]</scope>
    <source>
        <strain>KACC10331 / KXO85</strain>
    </source>
</reference>